<sequence>MADHLMLAEGYCLLQVPPHTHGPHAPRTLQPYAGPGMDSGLRPRGAPLGPPPPPGTLAYGSFGSPVSFQPFPVSQSPGAGSTHLQSAATPSPGRIPAPPAAAGGPSPLQPAPGAAASLPPPPPPPALGCMDTELIDEEALTSLELELGLHRVRELPELFLGQSEFDCFSDLGSAPAAGSVSC</sequence>
<evidence type="ECO:0000250" key="1"/>
<evidence type="ECO:0000250" key="2">
    <source>
        <dbReference type="UniProtKB" id="Q96RK1"/>
    </source>
</evidence>
<evidence type="ECO:0000255" key="3"/>
<evidence type="ECO:0000256" key="4">
    <source>
        <dbReference type="SAM" id="MobiDB-lite"/>
    </source>
</evidence>
<evidence type="ECO:0000269" key="5">
    <source>
    </source>
</evidence>
<evidence type="ECO:0000269" key="6">
    <source>
    </source>
</evidence>
<evidence type="ECO:0000269" key="7">
    <source>
    </source>
</evidence>
<evidence type="ECO:0000303" key="8">
    <source>
    </source>
</evidence>
<evidence type="ECO:0000305" key="9"/>
<evidence type="ECO:0000312" key="10">
    <source>
        <dbReference type="EMBL" id="AAD37357.1"/>
    </source>
</evidence>
<evidence type="ECO:0000312" key="11">
    <source>
        <dbReference type="EMBL" id="AAH25116.1"/>
    </source>
</evidence>
<evidence type="ECO:0000312" key="12">
    <source>
        <dbReference type="EMBL" id="AAH80723.1"/>
    </source>
</evidence>
<evidence type="ECO:0000312" key="13">
    <source>
        <dbReference type="EMBL" id="BAB28054.1"/>
    </source>
</evidence>
<evidence type="ECO:0000312" key="14">
    <source>
        <dbReference type="EMBL" id="BAE32327.1"/>
    </source>
</evidence>
<evidence type="ECO:0000312" key="15">
    <source>
        <dbReference type="MGI" id="MGI:1861694"/>
    </source>
</evidence>
<feature type="chain" id="PRO_0000233310" description="Cbp/p300-interacting transactivator 4">
    <location>
        <begin position="1"/>
        <end position="182"/>
    </location>
</feature>
<feature type="region of interest" description="Disordered" evidence="4">
    <location>
        <begin position="22"/>
        <end position="129"/>
    </location>
</feature>
<feature type="compositionally biased region" description="Polar residues" evidence="4">
    <location>
        <begin position="64"/>
        <end position="89"/>
    </location>
</feature>
<feature type="compositionally biased region" description="Low complexity" evidence="4">
    <location>
        <begin position="100"/>
        <end position="117"/>
    </location>
</feature>
<feature type="splice variant" id="VSP_052036" description="In isoform 3." evidence="8">
    <location>
        <begin position="1"/>
        <end position="129"/>
    </location>
</feature>
<feature type="splice variant" id="VSP_052035" description="In isoform 2." evidence="8">
    <location>
        <begin position="17"/>
        <end position="120"/>
    </location>
</feature>
<feature type="sequence conflict" description="In Ref. 2; BAB28054." evidence="9" ref="2">
    <original>S</original>
    <variation>W</variation>
    <location>
        <position position="117"/>
    </location>
</feature>
<feature type="sequence conflict" description="In Ref. 2; BAB28054." evidence="9" ref="2">
    <original>P</original>
    <variation>R</variation>
    <location>
        <position position="120"/>
    </location>
</feature>
<keyword id="KW-0010">Activator</keyword>
<keyword id="KW-0025">Alternative splicing</keyword>
<keyword id="KW-0963">Cytoplasm</keyword>
<keyword id="KW-0539">Nucleus</keyword>
<keyword id="KW-1185">Reference proteome</keyword>
<keyword id="KW-0804">Transcription</keyword>
<keyword id="KW-0805">Transcription regulation</keyword>
<organism>
    <name type="scientific">Mus musculus</name>
    <name type="common">Mouse</name>
    <dbReference type="NCBI Taxonomy" id="10090"/>
    <lineage>
        <taxon>Eukaryota</taxon>
        <taxon>Metazoa</taxon>
        <taxon>Chordata</taxon>
        <taxon>Craniata</taxon>
        <taxon>Vertebrata</taxon>
        <taxon>Euteleostomi</taxon>
        <taxon>Mammalia</taxon>
        <taxon>Eutheria</taxon>
        <taxon>Euarchontoglires</taxon>
        <taxon>Glires</taxon>
        <taxon>Rodentia</taxon>
        <taxon>Myomorpha</taxon>
        <taxon>Muroidea</taxon>
        <taxon>Muridae</taxon>
        <taxon>Murinae</taxon>
        <taxon>Mus</taxon>
        <taxon>Mus</taxon>
    </lineage>
</organism>
<proteinExistence type="evidence at protein level"/>
<accession>Q9WUL8</accession>
<accession>Q66JX0</accession>
<accession>Q8R176</accession>
<accession>Q9CZV4</accession>
<protein>
    <recommendedName>
        <fullName>Cbp/p300-interacting transactivator 4</fullName>
    </recommendedName>
    <alternativeName>
        <fullName>MSG1-related protein 2</fullName>
        <shortName>MRG-2</shortName>
    </alternativeName>
</protein>
<reference evidence="9 10" key="1">
    <citation type="journal article" date="2002" name="Genomics">
        <title>Cloning of mouse Cited4, a member of the CITED family p300/CBP-binding transcriptional coactivators: induced expression in mammary epithelial cells.</title>
        <authorList>
            <person name="Yahata T."/>
            <person name="Takedatsu H."/>
            <person name="Dunwoodie S.L."/>
            <person name="Braganca J."/>
            <person name="Swingler T."/>
            <person name="Withington S.L."/>
            <person name="Hur J."/>
            <person name="Coser K.R."/>
            <person name="Isselbacher K.J."/>
            <person name="Bhattacharya S."/>
            <person name="Shioda T."/>
        </authorList>
    </citation>
    <scope>NUCLEOTIDE SEQUENCE [MRNA] (ISOFORM 1)</scope>
    <scope>FUNCTION</scope>
    <scope>INTERACTION WITH CREBBP; EP300 AND TFAP2</scope>
    <scope>TISSUE SPECIFICITY</scope>
    <scope>DEVELOPMENTAL STAGE</scope>
    <source>
        <tissue evidence="10">Mammary gland</tissue>
    </source>
</reference>
<reference evidence="9 14" key="2">
    <citation type="journal article" date="2005" name="Science">
        <title>The transcriptional landscape of the mammalian genome.</title>
        <authorList>
            <person name="Carninci P."/>
            <person name="Kasukawa T."/>
            <person name="Katayama S."/>
            <person name="Gough J."/>
            <person name="Frith M.C."/>
            <person name="Maeda N."/>
            <person name="Oyama R."/>
            <person name="Ravasi T."/>
            <person name="Lenhard B."/>
            <person name="Wells C."/>
            <person name="Kodzius R."/>
            <person name="Shimokawa K."/>
            <person name="Bajic V.B."/>
            <person name="Brenner S.E."/>
            <person name="Batalov S."/>
            <person name="Forrest A.R."/>
            <person name="Zavolan M."/>
            <person name="Davis M.J."/>
            <person name="Wilming L.G."/>
            <person name="Aidinis V."/>
            <person name="Allen J.E."/>
            <person name="Ambesi-Impiombato A."/>
            <person name="Apweiler R."/>
            <person name="Aturaliya R.N."/>
            <person name="Bailey T.L."/>
            <person name="Bansal M."/>
            <person name="Baxter L."/>
            <person name="Beisel K.W."/>
            <person name="Bersano T."/>
            <person name="Bono H."/>
            <person name="Chalk A.M."/>
            <person name="Chiu K.P."/>
            <person name="Choudhary V."/>
            <person name="Christoffels A."/>
            <person name="Clutterbuck D.R."/>
            <person name="Crowe M.L."/>
            <person name="Dalla E."/>
            <person name="Dalrymple B.P."/>
            <person name="de Bono B."/>
            <person name="Della Gatta G."/>
            <person name="di Bernardo D."/>
            <person name="Down T."/>
            <person name="Engstrom P."/>
            <person name="Fagiolini M."/>
            <person name="Faulkner G."/>
            <person name="Fletcher C.F."/>
            <person name="Fukushima T."/>
            <person name="Furuno M."/>
            <person name="Futaki S."/>
            <person name="Gariboldi M."/>
            <person name="Georgii-Hemming P."/>
            <person name="Gingeras T.R."/>
            <person name="Gojobori T."/>
            <person name="Green R.E."/>
            <person name="Gustincich S."/>
            <person name="Harbers M."/>
            <person name="Hayashi Y."/>
            <person name="Hensch T.K."/>
            <person name="Hirokawa N."/>
            <person name="Hill D."/>
            <person name="Huminiecki L."/>
            <person name="Iacono M."/>
            <person name="Ikeo K."/>
            <person name="Iwama A."/>
            <person name="Ishikawa T."/>
            <person name="Jakt M."/>
            <person name="Kanapin A."/>
            <person name="Katoh M."/>
            <person name="Kawasawa Y."/>
            <person name="Kelso J."/>
            <person name="Kitamura H."/>
            <person name="Kitano H."/>
            <person name="Kollias G."/>
            <person name="Krishnan S.P."/>
            <person name="Kruger A."/>
            <person name="Kummerfeld S.K."/>
            <person name="Kurochkin I.V."/>
            <person name="Lareau L.F."/>
            <person name="Lazarevic D."/>
            <person name="Lipovich L."/>
            <person name="Liu J."/>
            <person name="Liuni S."/>
            <person name="McWilliam S."/>
            <person name="Madan Babu M."/>
            <person name="Madera M."/>
            <person name="Marchionni L."/>
            <person name="Matsuda H."/>
            <person name="Matsuzawa S."/>
            <person name="Miki H."/>
            <person name="Mignone F."/>
            <person name="Miyake S."/>
            <person name="Morris K."/>
            <person name="Mottagui-Tabar S."/>
            <person name="Mulder N."/>
            <person name="Nakano N."/>
            <person name="Nakauchi H."/>
            <person name="Ng P."/>
            <person name="Nilsson R."/>
            <person name="Nishiguchi S."/>
            <person name="Nishikawa S."/>
            <person name="Nori F."/>
            <person name="Ohara O."/>
            <person name="Okazaki Y."/>
            <person name="Orlando V."/>
            <person name="Pang K.C."/>
            <person name="Pavan W.J."/>
            <person name="Pavesi G."/>
            <person name="Pesole G."/>
            <person name="Petrovsky N."/>
            <person name="Piazza S."/>
            <person name="Reed J."/>
            <person name="Reid J.F."/>
            <person name="Ring B.Z."/>
            <person name="Ringwald M."/>
            <person name="Rost B."/>
            <person name="Ruan Y."/>
            <person name="Salzberg S.L."/>
            <person name="Sandelin A."/>
            <person name="Schneider C."/>
            <person name="Schoenbach C."/>
            <person name="Sekiguchi K."/>
            <person name="Semple C.A."/>
            <person name="Seno S."/>
            <person name="Sessa L."/>
            <person name="Sheng Y."/>
            <person name="Shibata Y."/>
            <person name="Shimada H."/>
            <person name="Shimada K."/>
            <person name="Silva D."/>
            <person name="Sinclair B."/>
            <person name="Sperling S."/>
            <person name="Stupka E."/>
            <person name="Sugiura K."/>
            <person name="Sultana R."/>
            <person name="Takenaka Y."/>
            <person name="Taki K."/>
            <person name="Tammoja K."/>
            <person name="Tan S.L."/>
            <person name="Tang S."/>
            <person name="Taylor M.S."/>
            <person name="Tegner J."/>
            <person name="Teichmann S.A."/>
            <person name="Ueda H.R."/>
            <person name="van Nimwegen E."/>
            <person name="Verardo R."/>
            <person name="Wei C.L."/>
            <person name="Yagi K."/>
            <person name="Yamanishi H."/>
            <person name="Zabarovsky E."/>
            <person name="Zhu S."/>
            <person name="Zimmer A."/>
            <person name="Hide W."/>
            <person name="Bult C."/>
            <person name="Grimmond S.M."/>
            <person name="Teasdale R.D."/>
            <person name="Liu E.T."/>
            <person name="Brusic V."/>
            <person name="Quackenbush J."/>
            <person name="Wahlestedt C."/>
            <person name="Mattick J.S."/>
            <person name="Hume D.A."/>
            <person name="Kai C."/>
            <person name="Sasaki D."/>
            <person name="Tomaru Y."/>
            <person name="Fukuda S."/>
            <person name="Kanamori-Katayama M."/>
            <person name="Suzuki M."/>
            <person name="Aoki J."/>
            <person name="Arakawa T."/>
            <person name="Iida J."/>
            <person name="Imamura K."/>
            <person name="Itoh M."/>
            <person name="Kato T."/>
            <person name="Kawaji H."/>
            <person name="Kawagashira N."/>
            <person name="Kawashima T."/>
            <person name="Kojima M."/>
            <person name="Kondo S."/>
            <person name="Konno H."/>
            <person name="Nakano K."/>
            <person name="Ninomiya N."/>
            <person name="Nishio T."/>
            <person name="Okada M."/>
            <person name="Plessy C."/>
            <person name="Shibata K."/>
            <person name="Shiraki T."/>
            <person name="Suzuki S."/>
            <person name="Tagami M."/>
            <person name="Waki K."/>
            <person name="Watahiki A."/>
            <person name="Okamura-Oho Y."/>
            <person name="Suzuki H."/>
            <person name="Kawai J."/>
            <person name="Hayashizaki Y."/>
        </authorList>
    </citation>
    <scope>NUCLEOTIDE SEQUENCE [LARGE SCALE MRNA] (ISOFORM 1)</scope>
    <source>
        <strain evidence="13">C57BL/6J</strain>
        <strain evidence="14">NOD</strain>
        <tissue evidence="13">Embryo</tissue>
        <tissue evidence="14">Thymus</tissue>
    </source>
</reference>
<reference evidence="9 11" key="3">
    <citation type="journal article" date="2004" name="Genome Res.">
        <title>The status, quality, and expansion of the NIH full-length cDNA project: the Mammalian Gene Collection (MGC).</title>
        <authorList>
            <consortium name="The MGC Project Team"/>
        </authorList>
    </citation>
    <scope>NUCLEOTIDE SEQUENCE [LARGE SCALE MRNA] (ISOFORMS 2 AND 3)</scope>
    <source>
        <strain evidence="12">NMRI</strain>
        <tissue evidence="11">Mammary gland</tissue>
    </source>
</reference>
<reference key="4">
    <citation type="journal article" date="2001" name="Genes Dev.">
        <title>Selective coactivation of estrogen-dependent transcription by CITED1 CBP/p300-binding protein.</title>
        <authorList>
            <person name="Yahata T."/>
            <person name="Shao W."/>
            <person name="Endoh H."/>
            <person name="Hur J."/>
            <person name="Coser K.R."/>
            <person name="Sun H."/>
            <person name="Ueda Y."/>
            <person name="Kato S."/>
            <person name="Isselbacher K.J."/>
            <person name="Brown M."/>
            <person name="Shioda T."/>
        </authorList>
    </citation>
    <scope>FUNCTION</scope>
</reference>
<name>CITE4_MOUSE</name>
<dbReference type="EMBL" id="AF143369">
    <property type="protein sequence ID" value="AAD37357.1"/>
    <property type="molecule type" value="mRNA"/>
</dbReference>
<dbReference type="EMBL" id="AK012136">
    <property type="protein sequence ID" value="BAB28054.1"/>
    <property type="molecule type" value="mRNA"/>
</dbReference>
<dbReference type="EMBL" id="AK154030">
    <property type="protein sequence ID" value="BAE32327.1"/>
    <property type="molecule type" value="mRNA"/>
</dbReference>
<dbReference type="EMBL" id="BC025116">
    <property type="protein sequence ID" value="AAH25116.1"/>
    <property type="molecule type" value="mRNA"/>
</dbReference>
<dbReference type="EMBL" id="BC080723">
    <property type="protein sequence ID" value="AAH80723.1"/>
    <property type="molecule type" value="mRNA"/>
</dbReference>
<dbReference type="CCDS" id="CCDS18592.1">
    <molecule id="Q9WUL8-1"/>
</dbReference>
<dbReference type="RefSeq" id="NP_062509.1">
    <molecule id="Q9WUL8-1"/>
    <property type="nucleotide sequence ID" value="NM_019563.2"/>
</dbReference>
<dbReference type="BioGRID" id="207856">
    <property type="interactions" value="15"/>
</dbReference>
<dbReference type="FunCoup" id="Q9WUL8">
    <property type="interactions" value="362"/>
</dbReference>
<dbReference type="IntAct" id="Q9WUL8">
    <property type="interactions" value="14"/>
</dbReference>
<dbReference type="STRING" id="10090.ENSMUSP00000092408"/>
<dbReference type="GlyGen" id="Q9WUL8">
    <property type="glycosylation" value="1 site"/>
</dbReference>
<dbReference type="PaxDb" id="10090-ENSMUSP00000092408"/>
<dbReference type="Antibodypedia" id="32148">
    <property type="antibodies" value="145 antibodies from 23 providers"/>
</dbReference>
<dbReference type="DNASU" id="56222"/>
<dbReference type="Ensembl" id="ENSMUST00000094814.6">
    <molecule id="Q9WUL8-1"/>
    <property type="protein sequence ID" value="ENSMUSP00000092408.5"/>
    <property type="gene ID" value="ENSMUSG00000070803.7"/>
</dbReference>
<dbReference type="GeneID" id="56222"/>
<dbReference type="KEGG" id="mmu:56222"/>
<dbReference type="UCSC" id="uc008unl.1">
    <molecule id="Q9WUL8-1"/>
    <property type="organism name" value="mouse"/>
</dbReference>
<dbReference type="AGR" id="MGI:1861694"/>
<dbReference type="CTD" id="163732"/>
<dbReference type="MGI" id="MGI:1861694">
    <property type="gene designation" value="Cited4"/>
</dbReference>
<dbReference type="VEuPathDB" id="HostDB:ENSMUSG00000070803"/>
<dbReference type="eggNOG" id="ENOG502QQEE">
    <property type="taxonomic scope" value="Eukaryota"/>
</dbReference>
<dbReference type="GeneTree" id="ENSGT00530000063624"/>
<dbReference type="HOGENOM" id="CLU_128809_0_0_1"/>
<dbReference type="InParanoid" id="Q9WUL8"/>
<dbReference type="OMA" id="GYHLVQR"/>
<dbReference type="OrthoDB" id="8939897at2759"/>
<dbReference type="PhylomeDB" id="Q9WUL8"/>
<dbReference type="TreeFam" id="TF331915"/>
<dbReference type="Reactome" id="R-MMU-8866907">
    <property type="pathway name" value="Activation of the TFAP2 (AP-2) family of transcription factors"/>
</dbReference>
<dbReference type="BioGRID-ORCS" id="56222">
    <property type="hits" value="0 hits in 80 CRISPR screens"/>
</dbReference>
<dbReference type="ChiTaRS" id="Cited4">
    <property type="organism name" value="mouse"/>
</dbReference>
<dbReference type="PRO" id="PR:Q9WUL8"/>
<dbReference type="Proteomes" id="UP000000589">
    <property type="component" value="Chromosome 4"/>
</dbReference>
<dbReference type="RNAct" id="Q9WUL8">
    <property type="molecule type" value="protein"/>
</dbReference>
<dbReference type="Bgee" id="ENSMUSG00000070803">
    <property type="expression patterns" value="Expressed in parotid gland and 110 other cell types or tissues"/>
</dbReference>
<dbReference type="ExpressionAtlas" id="Q9WUL8">
    <property type="expression patterns" value="baseline and differential"/>
</dbReference>
<dbReference type="GO" id="GO:0005737">
    <property type="term" value="C:cytoplasm"/>
    <property type="evidence" value="ECO:0000314"/>
    <property type="project" value="MGI"/>
</dbReference>
<dbReference type="GO" id="GO:0005634">
    <property type="term" value="C:nucleus"/>
    <property type="evidence" value="ECO:0000314"/>
    <property type="project" value="MGI"/>
</dbReference>
<dbReference type="GO" id="GO:0003713">
    <property type="term" value="F:transcription coactivator activity"/>
    <property type="evidence" value="ECO:0000314"/>
    <property type="project" value="UniProtKB"/>
</dbReference>
<dbReference type="GO" id="GO:0045893">
    <property type="term" value="P:positive regulation of DNA-templated transcription"/>
    <property type="evidence" value="ECO:0000314"/>
    <property type="project" value="MGI"/>
</dbReference>
<dbReference type="GO" id="GO:0043627">
    <property type="term" value="P:response to estrogen"/>
    <property type="evidence" value="ECO:0000314"/>
    <property type="project" value="UniProtKB"/>
</dbReference>
<dbReference type="FunFam" id="6.10.140.2200:FF:000001">
    <property type="entry name" value="Cbp/p300-interacting transactivator 2 isoform 1"/>
    <property type="match status" value="1"/>
</dbReference>
<dbReference type="Gene3D" id="6.10.140.2200">
    <property type="match status" value="1"/>
</dbReference>
<dbReference type="InterPro" id="IPR007576">
    <property type="entry name" value="CITED"/>
</dbReference>
<dbReference type="PANTHER" id="PTHR17045:SF5">
    <property type="entry name" value="CBP_P300-INTERACTING TRANSACTIVATOR 4"/>
    <property type="match status" value="1"/>
</dbReference>
<dbReference type="PANTHER" id="PTHR17045">
    <property type="entry name" value="MELANOCYTE SPECIFIC GENE RELATED CITED"/>
    <property type="match status" value="1"/>
</dbReference>
<dbReference type="Pfam" id="PF04487">
    <property type="entry name" value="CITED"/>
    <property type="match status" value="1"/>
</dbReference>
<gene>
    <name evidence="15" type="primary">Cited4</name>
    <name evidence="10" type="synonym">Mrg2</name>
</gene>
<comment type="function">
    <text evidence="5 6">Acts as a transcriptional coactivator for TFAP2/AP-2. Enhances estrogen-dependent transactivation mediated by estrogen receptors. May function as an inhibitor of transactivation by HIF1A by disrupting HIF1A interaction with CREBBP. May be involved in regulation of gene expression during development and differentiation of blood cells, endothelial cells and mammary epithelial cells.</text>
</comment>
<comment type="subunit">
    <text evidence="2 6">Interacts via its C-terminal region with the CH1 domain of CREBBP and EP300. Interacts with all TFAP2/AP-2 isoforms.</text>
</comment>
<comment type="subcellular location">
    <subcellularLocation>
        <location evidence="1">Nucleus</location>
    </subcellularLocation>
    <subcellularLocation>
        <location evidence="2">Cytoplasm</location>
    </subcellularLocation>
</comment>
<comment type="alternative products">
    <event type="alternative splicing"/>
    <isoform>
        <id>Q9WUL8-1</id>
        <name evidence="6">1</name>
        <sequence type="displayed"/>
    </isoform>
    <isoform>
        <id>Q9WUL8-2</id>
        <name evidence="7">2</name>
        <sequence type="described" ref="VSP_052035"/>
    </isoform>
    <isoform>
        <id>Q9WUL8-3</id>
        <name evidence="7">3</name>
        <sequence type="described" ref="VSP_052036"/>
    </isoform>
</comment>
<comment type="tissue specificity">
    <text evidence="6">Strongly expressed in heart, spleen and testis, and weakly in liver and kidney.</text>
</comment>
<comment type="developmental stage">
    <text evidence="6">Undetectable in nulliparous mammary glands but strongly expressed in 11.5 dpc pregnant mammary glands. Strong expression continued until the end of the lactacting stage and then rapidly diminished during the weaning stage.</text>
</comment>
<comment type="similarity">
    <text evidence="3">Belongs to the CITED family.</text>
</comment>